<comment type="function">
    <text evidence="1">Seems to regulate secreted factors that contribute to the establishment of persistent infections in the host.</text>
</comment>
<comment type="subcellular location">
    <subcellularLocation>
        <location evidence="1">Cytoplasm</location>
    </subcellularLocation>
</comment>
<comment type="similarity">
    <text evidence="2">Belongs to the EsaB family.</text>
</comment>
<proteinExistence type="inferred from homology"/>
<dbReference type="EMBL" id="CP000046">
    <property type="protein sequence ID" value="AAW38828.1"/>
    <property type="molecule type" value="Genomic_DNA"/>
</dbReference>
<dbReference type="RefSeq" id="WP_001071606.1">
    <property type="nucleotide sequence ID" value="NZ_JBGOFO010000001.1"/>
</dbReference>
<dbReference type="SMR" id="Q5HJ88"/>
<dbReference type="GeneID" id="98344609"/>
<dbReference type="KEGG" id="sac:SACOL0274"/>
<dbReference type="HOGENOM" id="CLU_189011_2_0_9"/>
<dbReference type="Proteomes" id="UP000000530">
    <property type="component" value="Chromosome"/>
</dbReference>
<dbReference type="GO" id="GO:0005737">
    <property type="term" value="C:cytoplasm"/>
    <property type="evidence" value="ECO:0007669"/>
    <property type="project" value="UniProtKB-SubCell"/>
</dbReference>
<dbReference type="Gene3D" id="3.10.20.90">
    <property type="entry name" value="Phosphatidylinositol 3-kinase Catalytic Subunit, Chain A, domain 1"/>
    <property type="match status" value="1"/>
</dbReference>
<dbReference type="InterPro" id="IPR014921">
    <property type="entry name" value="EsaB"/>
</dbReference>
<dbReference type="InterPro" id="IPR029071">
    <property type="entry name" value="Ubiquitin-like_domsf"/>
</dbReference>
<dbReference type="InterPro" id="IPR024962">
    <property type="entry name" value="YukD-like"/>
</dbReference>
<dbReference type="Pfam" id="PF08817">
    <property type="entry name" value="YukD"/>
    <property type="match status" value="1"/>
</dbReference>
<dbReference type="PIRSF" id="PIRSF037793">
    <property type="entry name" value="DUF_ubiquitin-like_YukD"/>
    <property type="match status" value="1"/>
</dbReference>
<dbReference type="SUPFAM" id="SSF54236">
    <property type="entry name" value="Ubiquitin-like"/>
    <property type="match status" value="1"/>
</dbReference>
<organism>
    <name type="scientific">Staphylococcus aureus (strain COL)</name>
    <dbReference type="NCBI Taxonomy" id="93062"/>
    <lineage>
        <taxon>Bacteria</taxon>
        <taxon>Bacillati</taxon>
        <taxon>Bacillota</taxon>
        <taxon>Bacilli</taxon>
        <taxon>Bacillales</taxon>
        <taxon>Staphylococcaceae</taxon>
        <taxon>Staphylococcus</taxon>
    </lineage>
</organism>
<gene>
    <name evidence="1" type="primary">esaB</name>
    <name type="ordered locus">SACOL0274</name>
</gene>
<evidence type="ECO:0000250" key="1">
    <source>
        <dbReference type="UniProtKB" id="P0C050"/>
    </source>
</evidence>
<evidence type="ECO:0000305" key="2"/>
<reference key="1">
    <citation type="journal article" date="2005" name="J. Bacteriol.">
        <title>Insights on evolution of virulence and resistance from the complete genome analysis of an early methicillin-resistant Staphylococcus aureus strain and a biofilm-producing methicillin-resistant Staphylococcus epidermidis strain.</title>
        <authorList>
            <person name="Gill S.R."/>
            <person name="Fouts D.E."/>
            <person name="Archer G.L."/>
            <person name="Mongodin E.F."/>
            <person name="DeBoy R.T."/>
            <person name="Ravel J."/>
            <person name="Paulsen I.T."/>
            <person name="Kolonay J.F."/>
            <person name="Brinkac L.M."/>
            <person name="Beanan M.J."/>
            <person name="Dodson R.J."/>
            <person name="Daugherty S.C."/>
            <person name="Madupu R."/>
            <person name="Angiuoli S.V."/>
            <person name="Durkin A.S."/>
            <person name="Haft D.H."/>
            <person name="Vamathevan J.J."/>
            <person name="Khouri H."/>
            <person name="Utterback T.R."/>
            <person name="Lee C."/>
            <person name="Dimitrov G."/>
            <person name="Jiang L."/>
            <person name="Qin H."/>
            <person name="Weidman J."/>
            <person name="Tran K."/>
            <person name="Kang K.H."/>
            <person name="Hance I.R."/>
            <person name="Nelson K.E."/>
            <person name="Fraser C.M."/>
        </authorList>
    </citation>
    <scope>NUCLEOTIDE SEQUENCE [LARGE SCALE GENOMIC DNA]</scope>
    <source>
        <strain>COL</strain>
    </source>
</reference>
<accession>Q5HJ88</accession>
<protein>
    <recommendedName>
        <fullName evidence="1">Type VII secretion system accessory factor EsaB</fullName>
    </recommendedName>
</protein>
<name>ESAB_STAAC</name>
<keyword id="KW-0963">Cytoplasm</keyword>
<keyword id="KW-0843">Virulence</keyword>
<feature type="chain" id="PRO_0000087043" description="Type VII secretion system accessory factor EsaB">
    <location>
        <begin position="1"/>
        <end position="80"/>
    </location>
</feature>
<sequence>MNQHVKVTFDFTNYNYGTYDLAVPAYLPIKNLIALVLDSLDISIFDVNTQIKVMTKGQLLVENDRLIDYQIADGDILKLL</sequence>